<sequence length="317" mass="35342">MKSDNHSFLGDSPKAFILLGVSDRPWLELPLFVVLLLSYVLAMLGNVAIILASRVDPQLHSPMYIFLSHLSFLDLCYTTTTVPQMLVNMGSSQKTISYGGCTVQYAVFHWLGCTECIVLAAMALDRYVAICKPLHYAVLMHRALCQQLVALAWLSGFGNSFVQVVLTVQLPFCGRQVLNNFFCEVPAVIKLSCADTAVNDTILAVLVAFFVLVPLALILLSYGFIARAVLRIQSSKGRHKAFGTCSSHLMIVSLFYLPAIYMYLQPPSSYSQEQGKFISLFYSIITPTLNPFTYTLRNKDMKGALRRLLARIWRLCG</sequence>
<reference key="1">
    <citation type="journal article" date="2006" name="Nature">
        <title>The DNA sequence and biological annotation of human chromosome 1.</title>
        <authorList>
            <person name="Gregory S.G."/>
            <person name="Barlow K.F."/>
            <person name="McLay K.E."/>
            <person name="Kaul R."/>
            <person name="Swarbreck D."/>
            <person name="Dunham A."/>
            <person name="Scott C.E."/>
            <person name="Howe K.L."/>
            <person name="Woodfine K."/>
            <person name="Spencer C.C.A."/>
            <person name="Jones M.C."/>
            <person name="Gillson C."/>
            <person name="Searle S."/>
            <person name="Zhou Y."/>
            <person name="Kokocinski F."/>
            <person name="McDonald L."/>
            <person name="Evans R."/>
            <person name="Phillips K."/>
            <person name="Atkinson A."/>
            <person name="Cooper R."/>
            <person name="Jones C."/>
            <person name="Hall R.E."/>
            <person name="Andrews T.D."/>
            <person name="Lloyd C."/>
            <person name="Ainscough R."/>
            <person name="Almeida J.P."/>
            <person name="Ambrose K.D."/>
            <person name="Anderson F."/>
            <person name="Andrew R.W."/>
            <person name="Ashwell R.I.S."/>
            <person name="Aubin K."/>
            <person name="Babbage A.K."/>
            <person name="Bagguley C.L."/>
            <person name="Bailey J."/>
            <person name="Beasley H."/>
            <person name="Bethel G."/>
            <person name="Bird C.P."/>
            <person name="Bray-Allen S."/>
            <person name="Brown J.Y."/>
            <person name="Brown A.J."/>
            <person name="Buckley D."/>
            <person name="Burton J."/>
            <person name="Bye J."/>
            <person name="Carder C."/>
            <person name="Chapman J.C."/>
            <person name="Clark S.Y."/>
            <person name="Clarke G."/>
            <person name="Clee C."/>
            <person name="Cobley V."/>
            <person name="Collier R.E."/>
            <person name="Corby N."/>
            <person name="Coville G.J."/>
            <person name="Davies J."/>
            <person name="Deadman R."/>
            <person name="Dunn M."/>
            <person name="Earthrowl M."/>
            <person name="Ellington A.G."/>
            <person name="Errington H."/>
            <person name="Frankish A."/>
            <person name="Frankland J."/>
            <person name="French L."/>
            <person name="Garner P."/>
            <person name="Garnett J."/>
            <person name="Gay L."/>
            <person name="Ghori M.R.J."/>
            <person name="Gibson R."/>
            <person name="Gilby L.M."/>
            <person name="Gillett W."/>
            <person name="Glithero R.J."/>
            <person name="Grafham D.V."/>
            <person name="Griffiths C."/>
            <person name="Griffiths-Jones S."/>
            <person name="Grocock R."/>
            <person name="Hammond S."/>
            <person name="Harrison E.S.I."/>
            <person name="Hart E."/>
            <person name="Haugen E."/>
            <person name="Heath P.D."/>
            <person name="Holmes S."/>
            <person name="Holt K."/>
            <person name="Howden P.J."/>
            <person name="Hunt A.R."/>
            <person name="Hunt S.E."/>
            <person name="Hunter G."/>
            <person name="Isherwood J."/>
            <person name="James R."/>
            <person name="Johnson C."/>
            <person name="Johnson D."/>
            <person name="Joy A."/>
            <person name="Kay M."/>
            <person name="Kershaw J.K."/>
            <person name="Kibukawa M."/>
            <person name="Kimberley A.M."/>
            <person name="King A."/>
            <person name="Knights A.J."/>
            <person name="Lad H."/>
            <person name="Laird G."/>
            <person name="Lawlor S."/>
            <person name="Leongamornlert D.A."/>
            <person name="Lloyd D.M."/>
            <person name="Loveland J."/>
            <person name="Lovell J."/>
            <person name="Lush M.J."/>
            <person name="Lyne R."/>
            <person name="Martin S."/>
            <person name="Mashreghi-Mohammadi M."/>
            <person name="Matthews L."/>
            <person name="Matthews N.S.W."/>
            <person name="McLaren S."/>
            <person name="Milne S."/>
            <person name="Mistry S."/>
            <person name="Moore M.J.F."/>
            <person name="Nickerson T."/>
            <person name="O'Dell C.N."/>
            <person name="Oliver K."/>
            <person name="Palmeiri A."/>
            <person name="Palmer S.A."/>
            <person name="Parker A."/>
            <person name="Patel D."/>
            <person name="Pearce A.V."/>
            <person name="Peck A.I."/>
            <person name="Pelan S."/>
            <person name="Phelps K."/>
            <person name="Phillimore B.J."/>
            <person name="Plumb R."/>
            <person name="Rajan J."/>
            <person name="Raymond C."/>
            <person name="Rouse G."/>
            <person name="Saenphimmachak C."/>
            <person name="Sehra H.K."/>
            <person name="Sheridan E."/>
            <person name="Shownkeen R."/>
            <person name="Sims S."/>
            <person name="Skuce C.D."/>
            <person name="Smith M."/>
            <person name="Steward C."/>
            <person name="Subramanian S."/>
            <person name="Sycamore N."/>
            <person name="Tracey A."/>
            <person name="Tromans A."/>
            <person name="Van Helmond Z."/>
            <person name="Wall M."/>
            <person name="Wallis J.M."/>
            <person name="White S."/>
            <person name="Whitehead S.L."/>
            <person name="Wilkinson J.E."/>
            <person name="Willey D.L."/>
            <person name="Williams H."/>
            <person name="Wilming L."/>
            <person name="Wray P.W."/>
            <person name="Wu Z."/>
            <person name="Coulson A."/>
            <person name="Vaudin M."/>
            <person name="Sulston J.E."/>
            <person name="Durbin R.M."/>
            <person name="Hubbard T."/>
            <person name="Wooster R."/>
            <person name="Dunham I."/>
            <person name="Carter N.P."/>
            <person name="McVean G."/>
            <person name="Ross M.T."/>
            <person name="Harrow J."/>
            <person name="Olson M.V."/>
            <person name="Beck S."/>
            <person name="Rogers J."/>
            <person name="Bentley D.R."/>
        </authorList>
    </citation>
    <scope>NUCLEOTIDE SEQUENCE [LARGE SCALE GENOMIC DNA]</scope>
</reference>
<reference key="2">
    <citation type="submission" date="2005-07" db="EMBL/GenBank/DDBJ databases">
        <authorList>
            <person name="Mural R.J."/>
            <person name="Istrail S."/>
            <person name="Sutton G.G."/>
            <person name="Florea L."/>
            <person name="Halpern A.L."/>
            <person name="Mobarry C.M."/>
            <person name="Lippert R."/>
            <person name="Walenz B."/>
            <person name="Shatkay H."/>
            <person name="Dew I."/>
            <person name="Miller J.R."/>
            <person name="Flanigan M.J."/>
            <person name="Edwards N.J."/>
            <person name="Bolanos R."/>
            <person name="Fasulo D."/>
            <person name="Halldorsson B.V."/>
            <person name="Hannenhalli S."/>
            <person name="Turner R."/>
            <person name="Yooseph S."/>
            <person name="Lu F."/>
            <person name="Nusskern D.R."/>
            <person name="Shue B.C."/>
            <person name="Zheng X.H."/>
            <person name="Zhong F."/>
            <person name="Delcher A.L."/>
            <person name="Huson D.H."/>
            <person name="Kravitz S.A."/>
            <person name="Mouchard L."/>
            <person name="Reinert K."/>
            <person name="Remington K.A."/>
            <person name="Clark A.G."/>
            <person name="Waterman M.S."/>
            <person name="Eichler E.E."/>
            <person name="Adams M.D."/>
            <person name="Hunkapiller M.W."/>
            <person name="Myers E.W."/>
            <person name="Venter J.C."/>
        </authorList>
    </citation>
    <scope>NUCLEOTIDE SEQUENCE [LARGE SCALE GENOMIC DNA]</scope>
    <scope>VARIANT MET-198</scope>
</reference>
<reference key="3">
    <citation type="journal article" date="2004" name="Genome Res.">
        <title>The status, quality, and expansion of the NIH full-length cDNA project: the Mammalian Gene Collection (MGC).</title>
        <authorList>
            <consortium name="The MGC Project Team"/>
        </authorList>
    </citation>
    <scope>NUCLEOTIDE SEQUENCE [LARGE SCALE MRNA]</scope>
    <scope>VARIANT MET-198</scope>
</reference>
<keyword id="KW-1003">Cell membrane</keyword>
<keyword id="KW-1015">Disulfide bond</keyword>
<keyword id="KW-0297">G-protein coupled receptor</keyword>
<keyword id="KW-0325">Glycoprotein</keyword>
<keyword id="KW-0472">Membrane</keyword>
<keyword id="KW-0552">Olfaction</keyword>
<keyword id="KW-0675">Receptor</keyword>
<keyword id="KW-1185">Reference proteome</keyword>
<keyword id="KW-0716">Sensory transduction</keyword>
<keyword id="KW-0807">Transducer</keyword>
<keyword id="KW-0812">Transmembrane</keyword>
<keyword id="KW-1133">Transmembrane helix</keyword>
<proteinExistence type="evidence at transcript level"/>
<evidence type="ECO:0000255" key="1"/>
<evidence type="ECO:0000255" key="2">
    <source>
        <dbReference type="PROSITE-ProRule" id="PRU00521"/>
    </source>
</evidence>
<evidence type="ECO:0000269" key="3">
    <source>
    </source>
</evidence>
<evidence type="ECO:0000269" key="4">
    <source ref="2"/>
</evidence>
<evidence type="ECO:0000305" key="5"/>
<accession>Q5JQS5</accession>
<accession>B2RP03</accession>
<dbReference type="EMBL" id="AL606804">
    <property type="status" value="NOT_ANNOTATED_CDS"/>
    <property type="molecule type" value="Genomic_DNA"/>
</dbReference>
<dbReference type="EMBL" id="CH471148">
    <property type="protein sequence ID" value="EAW77188.1"/>
    <property type="molecule type" value="Genomic_DNA"/>
</dbReference>
<dbReference type="EMBL" id="BC137181">
    <property type="protein sequence ID" value="AAI37182.1"/>
    <property type="molecule type" value="mRNA"/>
</dbReference>
<dbReference type="EMBL" id="BC137205">
    <property type="protein sequence ID" value="AAI37206.1"/>
    <property type="molecule type" value="mRNA"/>
</dbReference>
<dbReference type="CCDS" id="CCDS31090.1"/>
<dbReference type="RefSeq" id="NP_001004492.1">
    <property type="nucleotide sequence ID" value="NM_001004492.2"/>
</dbReference>
<dbReference type="SMR" id="Q5JQS5"/>
<dbReference type="BioGRID" id="126073">
    <property type="interactions" value="3"/>
</dbReference>
<dbReference type="FunCoup" id="Q5JQS5">
    <property type="interactions" value="481"/>
</dbReference>
<dbReference type="STRING" id="9606.ENSP00000492892"/>
<dbReference type="GlyCosmos" id="Q5JQS5">
    <property type="glycosylation" value="2 sites, No reported glycans"/>
</dbReference>
<dbReference type="GlyGen" id="Q5JQS5">
    <property type="glycosylation" value="2 sites, 1 N-linked glycan (1 site)"/>
</dbReference>
<dbReference type="iPTMnet" id="Q5JQS5"/>
<dbReference type="PhosphoSitePlus" id="Q5JQS5"/>
<dbReference type="BioMuta" id="OR2B11"/>
<dbReference type="DMDM" id="74762190"/>
<dbReference type="PaxDb" id="9606-ENSP00000325682"/>
<dbReference type="Antibodypedia" id="52545">
    <property type="antibodies" value="76 antibodies from 20 providers"/>
</dbReference>
<dbReference type="DNASU" id="127623"/>
<dbReference type="Ensembl" id="ENST00000641149.2">
    <property type="protein sequence ID" value="ENSP00000492892.1"/>
    <property type="gene ID" value="ENSG00000177535.10"/>
</dbReference>
<dbReference type="Ensembl" id="ENST00000641527.1">
    <property type="protein sequence ID" value="ENSP00000493421.1"/>
    <property type="gene ID" value="ENSG00000177535.10"/>
</dbReference>
<dbReference type="GeneID" id="127623"/>
<dbReference type="KEGG" id="hsa:127623"/>
<dbReference type="MANE-Select" id="ENST00000641149.2">
    <property type="protein sequence ID" value="ENSP00000492892.1"/>
    <property type="RefSeq nucleotide sequence ID" value="NM_001004492.2"/>
    <property type="RefSeq protein sequence ID" value="NP_001004492.1"/>
</dbReference>
<dbReference type="UCSC" id="uc010pyx.2">
    <property type="organism name" value="human"/>
</dbReference>
<dbReference type="AGR" id="HGNC:31249"/>
<dbReference type="CTD" id="127623"/>
<dbReference type="DisGeNET" id="127623"/>
<dbReference type="GeneCards" id="OR2B11"/>
<dbReference type="HGNC" id="HGNC:31249">
    <property type="gene designation" value="OR2B11"/>
</dbReference>
<dbReference type="HPA" id="ENSG00000177535">
    <property type="expression patterns" value="Not detected"/>
</dbReference>
<dbReference type="neXtProt" id="NX_Q5JQS5"/>
<dbReference type="OpenTargets" id="ENSG00000177535"/>
<dbReference type="PharmGKB" id="PA134961529"/>
<dbReference type="VEuPathDB" id="HostDB:ENSG00000177535"/>
<dbReference type="eggNOG" id="ENOG502RTXN">
    <property type="taxonomic scope" value="Eukaryota"/>
</dbReference>
<dbReference type="GeneTree" id="ENSGT01130000278264"/>
<dbReference type="HOGENOM" id="CLU_012526_1_2_1"/>
<dbReference type="InParanoid" id="Q5JQS5"/>
<dbReference type="OMA" id="CTECIIL"/>
<dbReference type="OrthoDB" id="5950740at2759"/>
<dbReference type="PAN-GO" id="Q5JQS5">
    <property type="GO annotations" value="0 GO annotations based on evolutionary models"/>
</dbReference>
<dbReference type="PhylomeDB" id="Q5JQS5"/>
<dbReference type="TreeFam" id="TF336512"/>
<dbReference type="PathwayCommons" id="Q5JQS5"/>
<dbReference type="Reactome" id="R-HSA-381753">
    <property type="pathway name" value="Olfactory Signaling Pathway"/>
</dbReference>
<dbReference type="Reactome" id="R-HSA-9752946">
    <property type="pathway name" value="Expression and translocation of olfactory receptors"/>
</dbReference>
<dbReference type="BioGRID-ORCS" id="127623">
    <property type="hits" value="8 hits in 753 CRISPR screens"/>
</dbReference>
<dbReference type="GeneWiki" id="OR2B11"/>
<dbReference type="GenomeRNAi" id="127623"/>
<dbReference type="Pharos" id="Q5JQS5">
    <property type="development level" value="Tdark"/>
</dbReference>
<dbReference type="PRO" id="PR:Q5JQS5"/>
<dbReference type="Proteomes" id="UP000005640">
    <property type="component" value="Chromosome 1"/>
</dbReference>
<dbReference type="RNAct" id="Q5JQS5">
    <property type="molecule type" value="protein"/>
</dbReference>
<dbReference type="Bgee" id="ENSG00000177535">
    <property type="expression patterns" value="Expressed in granulocyte and 21 other cell types or tissues"/>
</dbReference>
<dbReference type="ExpressionAtlas" id="Q5JQS5">
    <property type="expression patterns" value="baseline and differential"/>
</dbReference>
<dbReference type="GO" id="GO:0005886">
    <property type="term" value="C:plasma membrane"/>
    <property type="evidence" value="ECO:0000318"/>
    <property type="project" value="GO_Central"/>
</dbReference>
<dbReference type="GO" id="GO:0004930">
    <property type="term" value="F:G protein-coupled receptor activity"/>
    <property type="evidence" value="ECO:0007669"/>
    <property type="project" value="UniProtKB-KW"/>
</dbReference>
<dbReference type="GO" id="GO:0004984">
    <property type="term" value="F:olfactory receptor activity"/>
    <property type="evidence" value="ECO:0000318"/>
    <property type="project" value="GO_Central"/>
</dbReference>
<dbReference type="GO" id="GO:0050911">
    <property type="term" value="P:detection of chemical stimulus involved in sensory perception of smell"/>
    <property type="evidence" value="ECO:0000318"/>
    <property type="project" value="GO_Central"/>
</dbReference>
<dbReference type="CDD" id="cd15947">
    <property type="entry name" value="7tmA_OR2B-like"/>
    <property type="match status" value="1"/>
</dbReference>
<dbReference type="FunFam" id="1.20.1070.10:FF:000005">
    <property type="entry name" value="Olfactory receptor"/>
    <property type="match status" value="1"/>
</dbReference>
<dbReference type="Gene3D" id="1.20.1070.10">
    <property type="entry name" value="Rhodopsin 7-helix transmembrane proteins"/>
    <property type="match status" value="1"/>
</dbReference>
<dbReference type="InterPro" id="IPR000276">
    <property type="entry name" value="GPCR_Rhodpsn"/>
</dbReference>
<dbReference type="InterPro" id="IPR017452">
    <property type="entry name" value="GPCR_Rhodpsn_7TM"/>
</dbReference>
<dbReference type="InterPro" id="IPR000725">
    <property type="entry name" value="Olfact_rcpt"/>
</dbReference>
<dbReference type="PANTHER" id="PTHR26453">
    <property type="entry name" value="OLFACTORY RECEPTOR"/>
    <property type="match status" value="1"/>
</dbReference>
<dbReference type="Pfam" id="PF13853">
    <property type="entry name" value="7tm_4"/>
    <property type="match status" value="1"/>
</dbReference>
<dbReference type="PRINTS" id="PR00237">
    <property type="entry name" value="GPCRRHODOPSN"/>
</dbReference>
<dbReference type="PRINTS" id="PR00245">
    <property type="entry name" value="OLFACTORYR"/>
</dbReference>
<dbReference type="SUPFAM" id="SSF81321">
    <property type="entry name" value="Family A G protein-coupled receptor-like"/>
    <property type="match status" value="1"/>
</dbReference>
<dbReference type="PROSITE" id="PS00237">
    <property type="entry name" value="G_PROTEIN_RECEP_F1_1"/>
    <property type="match status" value="1"/>
</dbReference>
<dbReference type="PROSITE" id="PS50262">
    <property type="entry name" value="G_PROTEIN_RECEP_F1_2"/>
    <property type="match status" value="1"/>
</dbReference>
<feature type="chain" id="PRO_0000150464" description="Olfactory receptor 2B11">
    <location>
        <begin position="1"/>
        <end position="317"/>
    </location>
</feature>
<feature type="topological domain" description="Extracellular" evidence="1">
    <location>
        <begin position="1"/>
        <end position="29"/>
    </location>
</feature>
<feature type="transmembrane region" description="Helical; Name=1" evidence="1">
    <location>
        <begin position="30"/>
        <end position="53"/>
    </location>
</feature>
<feature type="topological domain" description="Cytoplasmic" evidence="1">
    <location>
        <begin position="54"/>
        <end position="61"/>
    </location>
</feature>
<feature type="transmembrane region" description="Helical; Name=2" evidence="1">
    <location>
        <begin position="62"/>
        <end position="83"/>
    </location>
</feature>
<feature type="topological domain" description="Extracellular" evidence="1">
    <location>
        <begin position="84"/>
        <end position="104"/>
    </location>
</feature>
<feature type="transmembrane region" description="Helical; Name=3" evidence="1">
    <location>
        <begin position="105"/>
        <end position="124"/>
    </location>
</feature>
<feature type="topological domain" description="Cytoplasmic" evidence="1">
    <location>
        <begin position="125"/>
        <end position="143"/>
    </location>
</feature>
<feature type="transmembrane region" description="Helical; Name=4" evidence="1">
    <location>
        <begin position="144"/>
        <end position="162"/>
    </location>
</feature>
<feature type="topological domain" description="Extracellular" evidence="1">
    <location>
        <begin position="163"/>
        <end position="199"/>
    </location>
</feature>
<feature type="transmembrane region" description="Helical; Name=5" evidence="1">
    <location>
        <begin position="200"/>
        <end position="223"/>
    </location>
</feature>
<feature type="topological domain" description="Cytoplasmic" evidence="1">
    <location>
        <begin position="224"/>
        <end position="240"/>
    </location>
</feature>
<feature type="transmembrane region" description="Helical; Name=6" evidence="1">
    <location>
        <begin position="241"/>
        <end position="263"/>
    </location>
</feature>
<feature type="topological domain" description="Extracellular" evidence="1">
    <location>
        <begin position="264"/>
        <end position="276"/>
    </location>
</feature>
<feature type="transmembrane region" description="Helical; Name=7" evidence="1">
    <location>
        <begin position="277"/>
        <end position="296"/>
    </location>
</feature>
<feature type="topological domain" description="Cytoplasmic" evidence="1">
    <location>
        <begin position="297"/>
        <end position="317"/>
    </location>
</feature>
<feature type="glycosylation site" description="N-linked (GlcNAc...) asparagine" evidence="1">
    <location>
        <position position="5"/>
    </location>
</feature>
<feature type="glycosylation site" description="N-linked (GlcNAc...) asparagine" evidence="1">
    <location>
        <position position="199"/>
    </location>
</feature>
<feature type="disulfide bond" evidence="2">
    <location>
        <begin position="101"/>
        <end position="193"/>
    </location>
</feature>
<feature type="sequence variant" id="VAR_062015" description="In dbSNP:rs11583410.">
    <original>I</original>
    <variation>S</variation>
    <location>
        <position position="130"/>
    </location>
</feature>
<feature type="sequence variant" id="VAR_053132" description="In dbSNP:rs6695302." evidence="3 4">
    <original>V</original>
    <variation>M</variation>
    <location>
        <position position="198"/>
    </location>
</feature>
<feature type="sequence variant" id="VAR_053133" description="In dbSNP:rs4925663.">
    <original>G</original>
    <variation>D</variation>
    <location>
        <position position="223"/>
    </location>
</feature>
<feature type="sequence variant" id="VAR_053134" description="In dbSNP:rs12065526.">
    <original>T</original>
    <variation>I</variation>
    <location>
        <position position="293"/>
    </location>
</feature>
<feature type="sequence variant" id="VAR_053135" description="In dbSNP:rs12070953.">
    <original>D</original>
    <variation>G</variation>
    <location>
        <position position="300"/>
    </location>
</feature>
<protein>
    <recommendedName>
        <fullName>Olfactory receptor 2B11</fullName>
    </recommendedName>
</protein>
<comment type="function">
    <text evidence="5">Odorant receptor.</text>
</comment>
<comment type="subcellular location">
    <subcellularLocation>
        <location>Cell membrane</location>
        <topology>Multi-pass membrane protein</topology>
    </subcellularLocation>
</comment>
<comment type="similarity">
    <text evidence="2">Belongs to the G-protein coupled receptor 1 family.</text>
</comment>
<comment type="online information" name="Human Olfactory Receptor Data Exploratorium (HORDE)">
    <link uri="http://genome.weizmann.ac.il/horde/card/index/symbol:OR2B11"/>
</comment>
<name>OR2BB_HUMAN</name>
<gene>
    <name type="primary">OR2B11</name>
</gene>
<organism>
    <name type="scientific">Homo sapiens</name>
    <name type="common">Human</name>
    <dbReference type="NCBI Taxonomy" id="9606"/>
    <lineage>
        <taxon>Eukaryota</taxon>
        <taxon>Metazoa</taxon>
        <taxon>Chordata</taxon>
        <taxon>Craniata</taxon>
        <taxon>Vertebrata</taxon>
        <taxon>Euteleostomi</taxon>
        <taxon>Mammalia</taxon>
        <taxon>Eutheria</taxon>
        <taxon>Euarchontoglires</taxon>
        <taxon>Primates</taxon>
        <taxon>Haplorrhini</taxon>
        <taxon>Catarrhini</taxon>
        <taxon>Hominidae</taxon>
        <taxon>Homo</taxon>
    </lineage>
</organism>